<dbReference type="EMBL" id="AM746676">
    <property type="protein sequence ID" value="CAN93972.1"/>
    <property type="molecule type" value="Genomic_DNA"/>
</dbReference>
<dbReference type="RefSeq" id="WP_012236442.1">
    <property type="nucleotide sequence ID" value="NC_010162.1"/>
</dbReference>
<dbReference type="SMR" id="A9GWT4"/>
<dbReference type="STRING" id="448385.sce3812"/>
<dbReference type="KEGG" id="scl:sce3812"/>
<dbReference type="eggNOG" id="COG1327">
    <property type="taxonomic scope" value="Bacteria"/>
</dbReference>
<dbReference type="HOGENOM" id="CLU_108412_0_0_7"/>
<dbReference type="OrthoDB" id="9807461at2"/>
<dbReference type="BioCyc" id="SCEL448385:SCE_RS19545-MONOMER"/>
<dbReference type="Proteomes" id="UP000002139">
    <property type="component" value="Chromosome"/>
</dbReference>
<dbReference type="GO" id="GO:0005524">
    <property type="term" value="F:ATP binding"/>
    <property type="evidence" value="ECO:0007669"/>
    <property type="project" value="UniProtKB-KW"/>
</dbReference>
<dbReference type="GO" id="GO:0003677">
    <property type="term" value="F:DNA binding"/>
    <property type="evidence" value="ECO:0007669"/>
    <property type="project" value="UniProtKB-KW"/>
</dbReference>
<dbReference type="GO" id="GO:0008270">
    <property type="term" value="F:zinc ion binding"/>
    <property type="evidence" value="ECO:0007669"/>
    <property type="project" value="UniProtKB-UniRule"/>
</dbReference>
<dbReference type="GO" id="GO:0045892">
    <property type="term" value="P:negative regulation of DNA-templated transcription"/>
    <property type="evidence" value="ECO:0007669"/>
    <property type="project" value="UniProtKB-UniRule"/>
</dbReference>
<dbReference type="HAMAP" id="MF_00440">
    <property type="entry name" value="NrdR"/>
    <property type="match status" value="1"/>
</dbReference>
<dbReference type="InterPro" id="IPR005144">
    <property type="entry name" value="ATP-cone_dom"/>
</dbReference>
<dbReference type="InterPro" id="IPR055173">
    <property type="entry name" value="NrdR-like_N"/>
</dbReference>
<dbReference type="InterPro" id="IPR003796">
    <property type="entry name" value="RNR_NrdR-like"/>
</dbReference>
<dbReference type="NCBIfam" id="TIGR00244">
    <property type="entry name" value="transcriptional regulator NrdR"/>
    <property type="match status" value="1"/>
</dbReference>
<dbReference type="PANTHER" id="PTHR30455">
    <property type="entry name" value="TRANSCRIPTIONAL REPRESSOR NRDR"/>
    <property type="match status" value="1"/>
</dbReference>
<dbReference type="PANTHER" id="PTHR30455:SF2">
    <property type="entry name" value="TRANSCRIPTIONAL REPRESSOR NRDR"/>
    <property type="match status" value="1"/>
</dbReference>
<dbReference type="Pfam" id="PF03477">
    <property type="entry name" value="ATP-cone"/>
    <property type="match status" value="1"/>
</dbReference>
<dbReference type="Pfam" id="PF22811">
    <property type="entry name" value="Zn_ribbon_NrdR"/>
    <property type="match status" value="1"/>
</dbReference>
<dbReference type="PROSITE" id="PS51161">
    <property type="entry name" value="ATP_CONE"/>
    <property type="match status" value="1"/>
</dbReference>
<comment type="function">
    <text evidence="1">Negatively regulates transcription of bacterial ribonucleotide reductase nrd genes and operons by binding to NrdR-boxes.</text>
</comment>
<comment type="cofactor">
    <cofactor evidence="1">
        <name>Zn(2+)</name>
        <dbReference type="ChEBI" id="CHEBI:29105"/>
    </cofactor>
    <text evidence="1">Binds 1 zinc ion.</text>
</comment>
<comment type="similarity">
    <text evidence="1">Belongs to the NrdR family.</text>
</comment>
<evidence type="ECO:0000255" key="1">
    <source>
        <dbReference type="HAMAP-Rule" id="MF_00440"/>
    </source>
</evidence>
<protein>
    <recommendedName>
        <fullName evidence="1">Transcriptional repressor NrdR</fullName>
    </recommendedName>
</protein>
<keyword id="KW-0067">ATP-binding</keyword>
<keyword id="KW-0238">DNA-binding</keyword>
<keyword id="KW-0479">Metal-binding</keyword>
<keyword id="KW-0547">Nucleotide-binding</keyword>
<keyword id="KW-1185">Reference proteome</keyword>
<keyword id="KW-0678">Repressor</keyword>
<keyword id="KW-0804">Transcription</keyword>
<keyword id="KW-0805">Transcription regulation</keyword>
<keyword id="KW-0862">Zinc</keyword>
<keyword id="KW-0863">Zinc-finger</keyword>
<name>NRDR_SORC5</name>
<feature type="chain" id="PRO_1000080835" description="Transcriptional repressor NrdR">
    <location>
        <begin position="1"/>
        <end position="153"/>
    </location>
</feature>
<feature type="domain" description="ATP-cone" evidence="1">
    <location>
        <begin position="49"/>
        <end position="139"/>
    </location>
</feature>
<feature type="zinc finger region" evidence="1">
    <location>
        <begin position="3"/>
        <end position="34"/>
    </location>
</feature>
<proteinExistence type="inferred from homology"/>
<accession>A9GWT4</accession>
<gene>
    <name evidence="1" type="primary">nrdR</name>
    <name type="ordered locus">sce3812</name>
</gene>
<reference key="1">
    <citation type="journal article" date="2007" name="Nat. Biotechnol.">
        <title>Complete genome sequence of the myxobacterium Sorangium cellulosum.</title>
        <authorList>
            <person name="Schneiker S."/>
            <person name="Perlova O."/>
            <person name="Kaiser O."/>
            <person name="Gerth K."/>
            <person name="Alici A."/>
            <person name="Altmeyer M.O."/>
            <person name="Bartels D."/>
            <person name="Bekel T."/>
            <person name="Beyer S."/>
            <person name="Bode E."/>
            <person name="Bode H.B."/>
            <person name="Bolten C.J."/>
            <person name="Choudhuri J.V."/>
            <person name="Doss S."/>
            <person name="Elnakady Y.A."/>
            <person name="Frank B."/>
            <person name="Gaigalat L."/>
            <person name="Goesmann A."/>
            <person name="Groeger C."/>
            <person name="Gross F."/>
            <person name="Jelsbak L."/>
            <person name="Jelsbak L."/>
            <person name="Kalinowski J."/>
            <person name="Kegler C."/>
            <person name="Knauber T."/>
            <person name="Konietzny S."/>
            <person name="Kopp M."/>
            <person name="Krause L."/>
            <person name="Krug D."/>
            <person name="Linke B."/>
            <person name="Mahmud T."/>
            <person name="Martinez-Arias R."/>
            <person name="McHardy A.C."/>
            <person name="Merai M."/>
            <person name="Meyer F."/>
            <person name="Mormann S."/>
            <person name="Munoz-Dorado J."/>
            <person name="Perez J."/>
            <person name="Pradella S."/>
            <person name="Rachid S."/>
            <person name="Raddatz G."/>
            <person name="Rosenau F."/>
            <person name="Rueckert C."/>
            <person name="Sasse F."/>
            <person name="Scharfe M."/>
            <person name="Schuster S.C."/>
            <person name="Suen G."/>
            <person name="Treuner-Lange A."/>
            <person name="Velicer G.J."/>
            <person name="Vorholter F.-J."/>
            <person name="Weissman K.J."/>
            <person name="Welch R.D."/>
            <person name="Wenzel S.C."/>
            <person name="Whitworth D.E."/>
            <person name="Wilhelm S."/>
            <person name="Wittmann C."/>
            <person name="Bloecker H."/>
            <person name="Puehler A."/>
            <person name="Mueller R."/>
        </authorList>
    </citation>
    <scope>NUCLEOTIDE SEQUENCE [LARGE SCALE GENOMIC DNA]</scope>
    <source>
        <strain>So ce56</strain>
    </source>
</reference>
<sequence>MKCPFCGHLEDRVIDSRAGGAGEVIRRRRECASCERRFTTYERVEDILPTVVKKDGRRESFDRQKLVRGLRIACNKRPVSTDQIEAIADAIEREAQESERREILSTELGERVMNHLRTLDEVAYVRFASVYRSFRDIDQFMVELGKLVKAKAP</sequence>
<organism>
    <name type="scientific">Sorangium cellulosum (strain So ce56)</name>
    <name type="common">Polyangium cellulosum (strain So ce56)</name>
    <dbReference type="NCBI Taxonomy" id="448385"/>
    <lineage>
        <taxon>Bacteria</taxon>
        <taxon>Pseudomonadati</taxon>
        <taxon>Myxococcota</taxon>
        <taxon>Polyangia</taxon>
        <taxon>Polyangiales</taxon>
        <taxon>Polyangiaceae</taxon>
        <taxon>Sorangium</taxon>
    </lineage>
</organism>